<name>BMTI4_RHIMP</name>
<feature type="chain" id="PRO_0000155453" description="Kunitz-type serine protease inhibitor 4">
    <location>
        <begin position="1"/>
        <end position="25" status="greater than"/>
    </location>
</feature>
<feature type="domain" description="BPTI/Kunitz inhibitor" evidence="2">
    <location>
        <begin position="7"/>
        <end position="25" status="greater than"/>
    </location>
</feature>
<feature type="site" description="Reactive bond" evidence="1">
    <location>
        <begin position="18"/>
        <end position="19"/>
    </location>
</feature>
<feature type="non-terminal residue">
    <location>
        <position position="25"/>
    </location>
</feature>
<sequence length="25" mass="2963">TPLKESTCYLPKETGPCVGYFFRYY</sequence>
<protein>
    <recommendedName>
        <fullName>Kunitz-type serine protease inhibitor 4</fullName>
        <shortName>BmTI-4</shortName>
    </recommendedName>
</protein>
<reference key="1">
    <citation type="submission" date="2003-06" db="UniProtKB">
        <title>Molecular studies of serine protease inhibitors from cattle tick Boophilus microplus (larvae).</title>
        <authorList>
            <person name="Sasaki S.D."/>
            <person name="Hirata I.Y."/>
            <person name="Tanaka A.S."/>
        </authorList>
    </citation>
    <scope>PROTEIN SEQUENCE</scope>
    <scope>FUNCTION</scope>
    <source>
        <tissue>Larva</tissue>
    </source>
</reference>
<comment type="function">
    <text evidence="3">Inhibits trypsin, human plasma kallikrein and human neutrophil elastase.</text>
</comment>
<comment type="subcellular location">
    <subcellularLocation>
        <location>Secreted</location>
    </subcellularLocation>
</comment>
<organism>
    <name type="scientific">Rhipicephalus microplus</name>
    <name type="common">Cattle tick</name>
    <name type="synonym">Boophilus microplus</name>
    <dbReference type="NCBI Taxonomy" id="6941"/>
    <lineage>
        <taxon>Eukaryota</taxon>
        <taxon>Metazoa</taxon>
        <taxon>Ecdysozoa</taxon>
        <taxon>Arthropoda</taxon>
        <taxon>Chelicerata</taxon>
        <taxon>Arachnida</taxon>
        <taxon>Acari</taxon>
        <taxon>Parasitiformes</taxon>
        <taxon>Ixodida</taxon>
        <taxon>Ixodoidea</taxon>
        <taxon>Ixodidae</taxon>
        <taxon>Rhipicephalinae</taxon>
        <taxon>Rhipicephalus</taxon>
        <taxon>Boophilus</taxon>
    </lineage>
</organism>
<accession>P83605</accession>
<keyword id="KW-0903">Direct protein sequencing</keyword>
<keyword id="KW-0646">Protease inhibitor</keyword>
<keyword id="KW-0964">Secreted</keyword>
<keyword id="KW-0722">Serine protease inhibitor</keyword>
<evidence type="ECO:0000250" key="1"/>
<evidence type="ECO:0000255" key="2">
    <source>
        <dbReference type="PROSITE-ProRule" id="PRU00031"/>
    </source>
</evidence>
<evidence type="ECO:0000269" key="3">
    <source ref="1"/>
</evidence>
<dbReference type="SMR" id="P83605"/>
<dbReference type="GO" id="GO:0005576">
    <property type="term" value="C:extracellular region"/>
    <property type="evidence" value="ECO:0007669"/>
    <property type="project" value="UniProtKB-SubCell"/>
</dbReference>
<dbReference type="GO" id="GO:0004867">
    <property type="term" value="F:serine-type endopeptidase inhibitor activity"/>
    <property type="evidence" value="ECO:0007669"/>
    <property type="project" value="UniProtKB-KW"/>
</dbReference>
<dbReference type="InterPro" id="IPR036880">
    <property type="entry name" value="Kunitz_BPTI_sf"/>
</dbReference>
<dbReference type="SUPFAM" id="SSF57362">
    <property type="entry name" value="BPTI-like"/>
    <property type="match status" value="1"/>
</dbReference>
<proteinExistence type="evidence at protein level"/>